<proteinExistence type="inferred from homology"/>
<name>SYR_PYRFU</name>
<evidence type="ECO:0000255" key="1">
    <source>
        <dbReference type="HAMAP-Rule" id="MF_00123"/>
    </source>
</evidence>
<dbReference type="EC" id="6.1.1.19" evidence="1"/>
<dbReference type="EMBL" id="AE009950">
    <property type="protein sequence ID" value="AAL81504.1"/>
    <property type="molecule type" value="Genomic_DNA"/>
</dbReference>
<dbReference type="RefSeq" id="WP_011012527.1">
    <property type="nucleotide sequence ID" value="NZ_CP023154.1"/>
</dbReference>
<dbReference type="SMR" id="Q8U149"/>
<dbReference type="STRING" id="186497.PF1380"/>
<dbReference type="PaxDb" id="186497-PF1380"/>
<dbReference type="KEGG" id="pfu:PF1380"/>
<dbReference type="PATRIC" id="fig|186497.12.peg.1443"/>
<dbReference type="eggNOG" id="arCOG00487">
    <property type="taxonomic scope" value="Archaea"/>
</dbReference>
<dbReference type="HOGENOM" id="CLU_006406_6_1_2"/>
<dbReference type="OrthoDB" id="372102at2157"/>
<dbReference type="PhylomeDB" id="Q8U149"/>
<dbReference type="Proteomes" id="UP000001013">
    <property type="component" value="Chromosome"/>
</dbReference>
<dbReference type="GO" id="GO:0005737">
    <property type="term" value="C:cytoplasm"/>
    <property type="evidence" value="ECO:0007669"/>
    <property type="project" value="UniProtKB-SubCell"/>
</dbReference>
<dbReference type="GO" id="GO:0004814">
    <property type="term" value="F:arginine-tRNA ligase activity"/>
    <property type="evidence" value="ECO:0007669"/>
    <property type="project" value="UniProtKB-UniRule"/>
</dbReference>
<dbReference type="GO" id="GO:0005524">
    <property type="term" value="F:ATP binding"/>
    <property type="evidence" value="ECO:0007669"/>
    <property type="project" value="UniProtKB-UniRule"/>
</dbReference>
<dbReference type="GO" id="GO:0006420">
    <property type="term" value="P:arginyl-tRNA aminoacylation"/>
    <property type="evidence" value="ECO:0007669"/>
    <property type="project" value="UniProtKB-UniRule"/>
</dbReference>
<dbReference type="CDD" id="cd07956">
    <property type="entry name" value="Anticodon_Ia_Arg"/>
    <property type="match status" value="1"/>
</dbReference>
<dbReference type="CDD" id="cd00671">
    <property type="entry name" value="ArgRS_core"/>
    <property type="match status" value="1"/>
</dbReference>
<dbReference type="FunFam" id="1.10.730.10:FF:000008">
    <property type="entry name" value="Arginine--tRNA ligase"/>
    <property type="match status" value="1"/>
</dbReference>
<dbReference type="FunFam" id="3.30.1360.70:FF:000008">
    <property type="entry name" value="Arginine--tRNA ligase"/>
    <property type="match status" value="1"/>
</dbReference>
<dbReference type="FunFam" id="3.40.50.620:FF:000190">
    <property type="entry name" value="Arginine--tRNA ligase"/>
    <property type="match status" value="1"/>
</dbReference>
<dbReference type="Gene3D" id="3.30.1360.70">
    <property type="entry name" value="Arginyl tRNA synthetase N-terminal domain"/>
    <property type="match status" value="1"/>
</dbReference>
<dbReference type="Gene3D" id="3.40.50.620">
    <property type="entry name" value="HUPs"/>
    <property type="match status" value="1"/>
</dbReference>
<dbReference type="Gene3D" id="1.10.730.10">
    <property type="entry name" value="Isoleucyl-tRNA Synthetase, Domain 1"/>
    <property type="match status" value="1"/>
</dbReference>
<dbReference type="HAMAP" id="MF_00123">
    <property type="entry name" value="Arg_tRNA_synth"/>
    <property type="match status" value="1"/>
</dbReference>
<dbReference type="InterPro" id="IPR001412">
    <property type="entry name" value="aa-tRNA-synth_I_CS"/>
</dbReference>
<dbReference type="InterPro" id="IPR001278">
    <property type="entry name" value="Arg-tRNA-ligase"/>
</dbReference>
<dbReference type="InterPro" id="IPR005148">
    <property type="entry name" value="Arg-tRNA-synth_N"/>
</dbReference>
<dbReference type="InterPro" id="IPR036695">
    <property type="entry name" value="Arg-tRNA-synth_N_sf"/>
</dbReference>
<dbReference type="InterPro" id="IPR035684">
    <property type="entry name" value="ArgRS_core"/>
</dbReference>
<dbReference type="InterPro" id="IPR008909">
    <property type="entry name" value="DALR_anticod-bd"/>
</dbReference>
<dbReference type="InterPro" id="IPR014729">
    <property type="entry name" value="Rossmann-like_a/b/a_fold"/>
</dbReference>
<dbReference type="InterPro" id="IPR009080">
    <property type="entry name" value="tRNAsynth_Ia_anticodon-bd"/>
</dbReference>
<dbReference type="NCBIfam" id="TIGR00456">
    <property type="entry name" value="argS"/>
    <property type="match status" value="1"/>
</dbReference>
<dbReference type="NCBIfam" id="NF002447">
    <property type="entry name" value="PRK01611.3-4"/>
    <property type="match status" value="1"/>
</dbReference>
<dbReference type="PANTHER" id="PTHR11956:SF5">
    <property type="entry name" value="ARGININE--TRNA LIGASE, CYTOPLASMIC"/>
    <property type="match status" value="1"/>
</dbReference>
<dbReference type="PANTHER" id="PTHR11956">
    <property type="entry name" value="ARGINYL-TRNA SYNTHETASE"/>
    <property type="match status" value="1"/>
</dbReference>
<dbReference type="Pfam" id="PF03485">
    <property type="entry name" value="Arg_tRNA_synt_N"/>
    <property type="match status" value="1"/>
</dbReference>
<dbReference type="Pfam" id="PF05746">
    <property type="entry name" value="DALR_1"/>
    <property type="match status" value="1"/>
</dbReference>
<dbReference type="Pfam" id="PF00750">
    <property type="entry name" value="tRNA-synt_1d"/>
    <property type="match status" value="2"/>
</dbReference>
<dbReference type="PRINTS" id="PR01038">
    <property type="entry name" value="TRNASYNTHARG"/>
</dbReference>
<dbReference type="SMART" id="SM01016">
    <property type="entry name" value="Arg_tRNA_synt_N"/>
    <property type="match status" value="1"/>
</dbReference>
<dbReference type="SMART" id="SM00836">
    <property type="entry name" value="DALR_1"/>
    <property type="match status" value="1"/>
</dbReference>
<dbReference type="SUPFAM" id="SSF47323">
    <property type="entry name" value="Anticodon-binding domain of a subclass of class I aminoacyl-tRNA synthetases"/>
    <property type="match status" value="1"/>
</dbReference>
<dbReference type="SUPFAM" id="SSF55190">
    <property type="entry name" value="Arginyl-tRNA synthetase (ArgRS), N-terminal 'additional' domain"/>
    <property type="match status" value="1"/>
</dbReference>
<dbReference type="SUPFAM" id="SSF52374">
    <property type="entry name" value="Nucleotidylyl transferase"/>
    <property type="match status" value="1"/>
</dbReference>
<dbReference type="PROSITE" id="PS00178">
    <property type="entry name" value="AA_TRNA_LIGASE_I"/>
    <property type="match status" value="1"/>
</dbReference>
<sequence>MMETIKSEIKRTIEGIVREMAPDWSEDIQFVDTPSPELGDFGTPVAFQLARLLRKSPLIIAQEIAEKFNKNKPKEVKKAIAVNGYVNFFLDYPQISKLVIEAILGYGTEYGRSEIGKGKKVIVEHTSVNPTKPLHMGHARNAILGDTVARILRFLGYQVEVQNYIDDLGVQFAQVYWGYLNLKRKFDELMKELKEKIPKNNPIDHVLGLLYVEVNKKIEESSEVEKEIRELMKKLEERELNGRKLAEEVVKAQMETLYSLNIYYDLLVWESDIVSTRLFEKTIKLLEKNENFYTPKEGKYKGAFVMDLSKLFPDMKNPYLVLRRSDGTATYTGKDIAYHLWKFGKIDIDLMYKKWDEHTWTTAPDGEPIPGKFGAGDIVINVIGAEQRHPQLAIKYALELLGYKDAAENFHHLAYEHVESPEGKFSGRKGTWVGFTVDEVIAEAINKAKSLIEEKNPNLTEEEKEEIAKKVAVGAIRYTLIKYSPEKKIVFRWEDVLNFEGESAPYIQYAHARCSSILRKAEELGISTDWKSLLKVANFNQITEKERELIMLLSRFPEIVQQAGTDLKPHLIAWYANEVASTFNKFYMDHPVIKAEEGVREARLLLVMATRQVLRNSLWLMGIEAPDKM</sequence>
<reference key="1">
    <citation type="journal article" date="1999" name="Genetics">
        <title>Divergence of the hyperthermophilic archaea Pyrococcus furiosus and P. horikoshii inferred from complete genomic sequences.</title>
        <authorList>
            <person name="Maeder D.L."/>
            <person name="Weiss R.B."/>
            <person name="Dunn D.M."/>
            <person name="Cherry J.L."/>
            <person name="Gonzalez J.M."/>
            <person name="DiRuggiero J."/>
            <person name="Robb F.T."/>
        </authorList>
    </citation>
    <scope>NUCLEOTIDE SEQUENCE [LARGE SCALE GENOMIC DNA]</scope>
    <source>
        <strain>ATCC 43587 / DSM 3638 / JCM 8422 / Vc1</strain>
    </source>
</reference>
<keyword id="KW-0030">Aminoacyl-tRNA synthetase</keyword>
<keyword id="KW-0067">ATP-binding</keyword>
<keyword id="KW-0963">Cytoplasm</keyword>
<keyword id="KW-0436">Ligase</keyword>
<keyword id="KW-0547">Nucleotide-binding</keyword>
<keyword id="KW-0648">Protein biosynthesis</keyword>
<keyword id="KW-1185">Reference proteome</keyword>
<accession>Q8U149</accession>
<protein>
    <recommendedName>
        <fullName evidence="1">Arginine--tRNA ligase</fullName>
        <ecNumber evidence="1">6.1.1.19</ecNumber>
    </recommendedName>
    <alternativeName>
        <fullName evidence="1">Arginyl-tRNA synthetase</fullName>
        <shortName evidence="1">ArgRS</shortName>
    </alternativeName>
</protein>
<organism>
    <name type="scientific">Pyrococcus furiosus (strain ATCC 43587 / DSM 3638 / JCM 8422 / Vc1)</name>
    <dbReference type="NCBI Taxonomy" id="186497"/>
    <lineage>
        <taxon>Archaea</taxon>
        <taxon>Methanobacteriati</taxon>
        <taxon>Methanobacteriota</taxon>
        <taxon>Thermococci</taxon>
        <taxon>Thermococcales</taxon>
        <taxon>Thermococcaceae</taxon>
        <taxon>Pyrococcus</taxon>
    </lineage>
</organism>
<comment type="catalytic activity">
    <reaction evidence="1">
        <text>tRNA(Arg) + L-arginine + ATP = L-arginyl-tRNA(Arg) + AMP + diphosphate</text>
        <dbReference type="Rhea" id="RHEA:20301"/>
        <dbReference type="Rhea" id="RHEA-COMP:9658"/>
        <dbReference type="Rhea" id="RHEA-COMP:9673"/>
        <dbReference type="ChEBI" id="CHEBI:30616"/>
        <dbReference type="ChEBI" id="CHEBI:32682"/>
        <dbReference type="ChEBI" id="CHEBI:33019"/>
        <dbReference type="ChEBI" id="CHEBI:78442"/>
        <dbReference type="ChEBI" id="CHEBI:78513"/>
        <dbReference type="ChEBI" id="CHEBI:456215"/>
        <dbReference type="EC" id="6.1.1.19"/>
    </reaction>
</comment>
<comment type="subcellular location">
    <subcellularLocation>
        <location evidence="1">Cytoplasm</location>
    </subcellularLocation>
</comment>
<comment type="similarity">
    <text evidence="1">Belongs to the class-I aminoacyl-tRNA synthetase family.</text>
</comment>
<feature type="chain" id="PRO_0000151652" description="Arginine--tRNA ligase">
    <location>
        <begin position="1"/>
        <end position="629"/>
    </location>
</feature>
<feature type="short sequence motif" description="'HIGH' region">
    <location>
        <begin position="128"/>
        <end position="138"/>
    </location>
</feature>
<gene>
    <name evidence="1" type="primary">argS</name>
    <name type="ordered locus">PF1380</name>
</gene>